<evidence type="ECO:0000255" key="1">
    <source>
        <dbReference type="HAMAP-Rule" id="MF_00188"/>
    </source>
</evidence>
<organism>
    <name type="scientific">Desulfotalea psychrophila (strain LSv54 / DSM 12343)</name>
    <dbReference type="NCBI Taxonomy" id="177439"/>
    <lineage>
        <taxon>Bacteria</taxon>
        <taxon>Pseudomonadati</taxon>
        <taxon>Thermodesulfobacteriota</taxon>
        <taxon>Desulfobulbia</taxon>
        <taxon>Desulfobulbales</taxon>
        <taxon>Desulfocapsaceae</taxon>
        <taxon>Desulfotalea</taxon>
    </lineage>
</organism>
<comment type="cofactor">
    <cofactor evidence="1">
        <name>Zn(2+)</name>
        <dbReference type="ChEBI" id="CHEBI:29105"/>
    </cofactor>
    <text evidence="1">Binds 1 zinc ion per subunit.</text>
</comment>
<comment type="subcellular location">
    <subcellularLocation>
        <location evidence="1">Cell inner membrane</location>
        <topology evidence="1">Multi-pass membrane protein</topology>
    </subcellularLocation>
</comment>
<comment type="similarity">
    <text evidence="1">Belongs to the peptidase M48B family.</text>
</comment>
<reference key="1">
    <citation type="journal article" date="2004" name="Environ. Microbiol.">
        <title>The genome of Desulfotalea psychrophila, a sulfate-reducing bacterium from permanently cold Arctic sediments.</title>
        <authorList>
            <person name="Rabus R."/>
            <person name="Ruepp A."/>
            <person name="Frickey T."/>
            <person name="Rattei T."/>
            <person name="Fartmann B."/>
            <person name="Stark M."/>
            <person name="Bauer M."/>
            <person name="Zibat A."/>
            <person name="Lombardot T."/>
            <person name="Becker I."/>
            <person name="Amann J."/>
            <person name="Gellner K."/>
            <person name="Teeling H."/>
            <person name="Leuschner W.D."/>
            <person name="Gloeckner F.-O."/>
            <person name="Lupas A.N."/>
            <person name="Amann R."/>
            <person name="Klenk H.-P."/>
        </authorList>
    </citation>
    <scope>NUCLEOTIDE SEQUENCE [LARGE SCALE GENOMIC DNA]</scope>
    <source>
        <strain>DSM 12343 / LSv54</strain>
    </source>
</reference>
<sequence length="287" mass="30960">MFRVGLFLATNLAILLLLGLVMSLLGLDSRSASGLLLMAGCFGMGGSLISLALSKWIAKKATGAHVIEQPRNGTEEWLLHTVARQAQTAGIGMPEVAVYEADDMNAFATGMRRDAALVAVSTGLIRGMSQDEVEAVLAHEMSHIANGDMVTLSLIQGVLNTFVIFLSRMAANVIDNFLSSDEDGGGLGFFGYMAVSMLLEFVFGLFASMIVMWFSRRREFRADYGATELASKQKMIAALARLQQQHISSSLPEQVAAFGIRPRQGGLAELFRSHPSLEDRIAALEAI</sequence>
<name>HTPX_DESPS</name>
<keyword id="KW-0997">Cell inner membrane</keyword>
<keyword id="KW-1003">Cell membrane</keyword>
<keyword id="KW-0378">Hydrolase</keyword>
<keyword id="KW-0472">Membrane</keyword>
<keyword id="KW-0479">Metal-binding</keyword>
<keyword id="KW-0482">Metalloprotease</keyword>
<keyword id="KW-0645">Protease</keyword>
<keyword id="KW-1185">Reference proteome</keyword>
<keyword id="KW-0812">Transmembrane</keyword>
<keyword id="KW-1133">Transmembrane helix</keyword>
<keyword id="KW-0862">Zinc</keyword>
<feature type="chain" id="PRO_1000020861" description="Protease HtpX homolog">
    <location>
        <begin position="1"/>
        <end position="287"/>
    </location>
</feature>
<feature type="transmembrane region" description="Helical" evidence="1">
    <location>
        <begin position="4"/>
        <end position="24"/>
    </location>
</feature>
<feature type="transmembrane region" description="Helical" evidence="1">
    <location>
        <begin position="35"/>
        <end position="53"/>
    </location>
</feature>
<feature type="transmembrane region" description="Helical" evidence="1">
    <location>
        <begin position="147"/>
        <end position="167"/>
    </location>
</feature>
<feature type="transmembrane region" description="Helical" evidence="1">
    <location>
        <begin position="194"/>
        <end position="214"/>
    </location>
</feature>
<feature type="active site" evidence="1">
    <location>
        <position position="140"/>
    </location>
</feature>
<feature type="binding site" evidence="1">
    <location>
        <position position="139"/>
    </location>
    <ligand>
        <name>Zn(2+)</name>
        <dbReference type="ChEBI" id="CHEBI:29105"/>
        <note>catalytic</note>
    </ligand>
</feature>
<feature type="binding site" evidence="1">
    <location>
        <position position="143"/>
    </location>
    <ligand>
        <name>Zn(2+)</name>
        <dbReference type="ChEBI" id="CHEBI:29105"/>
        <note>catalytic</note>
    </ligand>
</feature>
<feature type="binding site" evidence="1">
    <location>
        <position position="219"/>
    </location>
    <ligand>
        <name>Zn(2+)</name>
        <dbReference type="ChEBI" id="CHEBI:29105"/>
        <note>catalytic</note>
    </ligand>
</feature>
<gene>
    <name evidence="1" type="primary">htpX</name>
    <name type="ordered locus">DP1671</name>
</gene>
<dbReference type="EC" id="3.4.24.-" evidence="1"/>
<dbReference type="EMBL" id="CR522870">
    <property type="protein sequence ID" value="CAG36400.1"/>
    <property type="molecule type" value="Genomic_DNA"/>
</dbReference>
<dbReference type="RefSeq" id="WP_011188912.1">
    <property type="nucleotide sequence ID" value="NC_006138.1"/>
</dbReference>
<dbReference type="SMR" id="Q6AMM5"/>
<dbReference type="STRING" id="177439.DP1671"/>
<dbReference type="MEROPS" id="M48.002"/>
<dbReference type="KEGG" id="dps:DP1671"/>
<dbReference type="eggNOG" id="COG0501">
    <property type="taxonomic scope" value="Bacteria"/>
</dbReference>
<dbReference type="HOGENOM" id="CLU_042266_1_0_7"/>
<dbReference type="OrthoDB" id="15218at2"/>
<dbReference type="Proteomes" id="UP000000602">
    <property type="component" value="Chromosome"/>
</dbReference>
<dbReference type="GO" id="GO:0005886">
    <property type="term" value="C:plasma membrane"/>
    <property type="evidence" value="ECO:0007669"/>
    <property type="project" value="UniProtKB-SubCell"/>
</dbReference>
<dbReference type="GO" id="GO:0004222">
    <property type="term" value="F:metalloendopeptidase activity"/>
    <property type="evidence" value="ECO:0007669"/>
    <property type="project" value="UniProtKB-UniRule"/>
</dbReference>
<dbReference type="GO" id="GO:0008270">
    <property type="term" value="F:zinc ion binding"/>
    <property type="evidence" value="ECO:0007669"/>
    <property type="project" value="UniProtKB-UniRule"/>
</dbReference>
<dbReference type="GO" id="GO:0006508">
    <property type="term" value="P:proteolysis"/>
    <property type="evidence" value="ECO:0007669"/>
    <property type="project" value="UniProtKB-KW"/>
</dbReference>
<dbReference type="CDD" id="cd07335">
    <property type="entry name" value="M48B_HtpX_like"/>
    <property type="match status" value="1"/>
</dbReference>
<dbReference type="FunFam" id="3.30.2010.10:FF:000001">
    <property type="entry name" value="Protease HtpX"/>
    <property type="match status" value="1"/>
</dbReference>
<dbReference type="Gene3D" id="3.30.2010.10">
    <property type="entry name" value="Metalloproteases ('zincins'), catalytic domain"/>
    <property type="match status" value="1"/>
</dbReference>
<dbReference type="HAMAP" id="MF_00188">
    <property type="entry name" value="Pept_M48_protease_HtpX"/>
    <property type="match status" value="1"/>
</dbReference>
<dbReference type="InterPro" id="IPR050083">
    <property type="entry name" value="HtpX_protease"/>
</dbReference>
<dbReference type="InterPro" id="IPR022919">
    <property type="entry name" value="Pept_M48_protease_HtpX"/>
</dbReference>
<dbReference type="InterPro" id="IPR001915">
    <property type="entry name" value="Peptidase_M48"/>
</dbReference>
<dbReference type="NCBIfam" id="NF003965">
    <property type="entry name" value="PRK05457.1"/>
    <property type="match status" value="1"/>
</dbReference>
<dbReference type="PANTHER" id="PTHR43221">
    <property type="entry name" value="PROTEASE HTPX"/>
    <property type="match status" value="1"/>
</dbReference>
<dbReference type="PANTHER" id="PTHR43221:SF1">
    <property type="entry name" value="PROTEASE HTPX"/>
    <property type="match status" value="1"/>
</dbReference>
<dbReference type="Pfam" id="PF01435">
    <property type="entry name" value="Peptidase_M48"/>
    <property type="match status" value="1"/>
</dbReference>
<accession>Q6AMM5</accession>
<proteinExistence type="inferred from homology"/>
<protein>
    <recommendedName>
        <fullName evidence="1">Protease HtpX homolog</fullName>
        <ecNumber evidence="1">3.4.24.-</ecNumber>
    </recommendedName>
</protein>